<sequence length="239" mass="26099">MNKNIVIKSMAALAILTSVTGINAAVVEETQQIANAEKNVTQVKDTNNFPYNGVVSFKDATGFVIGKNTIITNKHVSKDYKVGDRITAHPNGDKGNGGIYKIKSISDYPGDEDISVMNIEEQAVERGPKGFNFNENVQAFNFAKDAKVDDKIKVIGYPLPAQNSFKQFESTGTIKRIKDNILNFDAYIEPGNSGSPVLNSNNEVIGVVYGGIGKIGSEYNGAVYFTPQIKDFIQKHIEQ</sequence>
<proteinExistence type="inferred from homology"/>
<gene>
    <name type="primary">splC</name>
    <name type="ordered locus">SaurJH9_1862</name>
</gene>
<protein>
    <recommendedName>
        <fullName>Serine protease SplC</fullName>
        <ecNumber>3.4.21.-</ecNumber>
    </recommendedName>
</protein>
<name>SPLC_STAA9</name>
<feature type="signal peptide" evidence="1">
    <location>
        <begin position="1"/>
        <end position="36"/>
    </location>
</feature>
<feature type="chain" id="PRO_5000247319" description="Serine protease SplC">
    <location>
        <begin position="37"/>
        <end position="239"/>
    </location>
</feature>
<feature type="active site" description="Charge relay system" evidence="1">
    <location>
        <position position="75"/>
    </location>
</feature>
<feature type="active site" description="Charge relay system" evidence="1">
    <location>
        <position position="113"/>
    </location>
</feature>
<feature type="active site" description="Charge relay system" evidence="1">
    <location>
        <position position="193"/>
    </location>
</feature>
<keyword id="KW-0378">Hydrolase</keyword>
<keyword id="KW-0645">Protease</keyword>
<keyword id="KW-0964">Secreted</keyword>
<keyword id="KW-0720">Serine protease</keyword>
<keyword id="KW-0732">Signal</keyword>
<organism>
    <name type="scientific">Staphylococcus aureus (strain JH9)</name>
    <dbReference type="NCBI Taxonomy" id="359786"/>
    <lineage>
        <taxon>Bacteria</taxon>
        <taxon>Bacillati</taxon>
        <taxon>Bacillota</taxon>
        <taxon>Bacilli</taxon>
        <taxon>Bacillales</taxon>
        <taxon>Staphylococcaceae</taxon>
        <taxon>Staphylococcus</taxon>
    </lineage>
</organism>
<accession>A5ITX6</accession>
<dbReference type="EC" id="3.4.21.-"/>
<dbReference type="EMBL" id="CP000703">
    <property type="protein sequence ID" value="ABQ49649.1"/>
    <property type="molecule type" value="Genomic_DNA"/>
</dbReference>
<dbReference type="RefSeq" id="WP_001038872.1">
    <property type="nucleotide sequence ID" value="NC_009487.1"/>
</dbReference>
<dbReference type="SMR" id="A5ITX6"/>
<dbReference type="MEROPS" id="S01.283"/>
<dbReference type="KEGG" id="saj:SaurJH9_1862"/>
<dbReference type="HOGENOM" id="CLU_073589_2_0_9"/>
<dbReference type="GO" id="GO:0005576">
    <property type="term" value="C:extracellular region"/>
    <property type="evidence" value="ECO:0007669"/>
    <property type="project" value="UniProtKB-SubCell"/>
</dbReference>
<dbReference type="GO" id="GO:0004252">
    <property type="term" value="F:serine-type endopeptidase activity"/>
    <property type="evidence" value="ECO:0007669"/>
    <property type="project" value="InterPro"/>
</dbReference>
<dbReference type="GO" id="GO:0006508">
    <property type="term" value="P:proteolysis"/>
    <property type="evidence" value="ECO:0007669"/>
    <property type="project" value="UniProtKB-KW"/>
</dbReference>
<dbReference type="Gene3D" id="2.40.10.10">
    <property type="entry name" value="Trypsin-like serine proteases"/>
    <property type="match status" value="2"/>
</dbReference>
<dbReference type="InterPro" id="IPR009003">
    <property type="entry name" value="Peptidase_S1_PA"/>
</dbReference>
<dbReference type="InterPro" id="IPR043504">
    <property type="entry name" value="Peptidase_S1_PA_chymotrypsin"/>
</dbReference>
<dbReference type="InterPro" id="IPR008256">
    <property type="entry name" value="Peptidase_S1B"/>
</dbReference>
<dbReference type="InterPro" id="IPR008353">
    <property type="entry name" value="Peptidase_S1B_tx"/>
</dbReference>
<dbReference type="InterPro" id="IPR001254">
    <property type="entry name" value="Trypsin_dom"/>
</dbReference>
<dbReference type="InterPro" id="IPR028301">
    <property type="entry name" value="V8_his_AS"/>
</dbReference>
<dbReference type="PANTHER" id="PTHR43019:SF23">
    <property type="entry name" value="PROTEASE DO-LIKE 5, CHLOROPLASTIC"/>
    <property type="match status" value="1"/>
</dbReference>
<dbReference type="PANTHER" id="PTHR43019">
    <property type="entry name" value="SERINE ENDOPROTEASE DEGS"/>
    <property type="match status" value="1"/>
</dbReference>
<dbReference type="Pfam" id="PF00089">
    <property type="entry name" value="Trypsin"/>
    <property type="match status" value="1"/>
</dbReference>
<dbReference type="PRINTS" id="PR01774">
    <property type="entry name" value="EXFOLTOXIN"/>
</dbReference>
<dbReference type="PRINTS" id="PR00839">
    <property type="entry name" value="V8PROTEASE"/>
</dbReference>
<dbReference type="SUPFAM" id="SSF50494">
    <property type="entry name" value="Trypsin-like serine proteases"/>
    <property type="match status" value="1"/>
</dbReference>
<dbReference type="PROSITE" id="PS00672">
    <property type="entry name" value="V8_HIS"/>
    <property type="match status" value="1"/>
</dbReference>
<evidence type="ECO:0000250" key="1"/>
<evidence type="ECO:0000305" key="2"/>
<comment type="subcellular location">
    <subcellularLocation>
        <location evidence="1">Secreted</location>
    </subcellularLocation>
</comment>
<comment type="similarity">
    <text evidence="2">Belongs to the peptidase S1B family.</text>
</comment>
<reference key="1">
    <citation type="submission" date="2007-05" db="EMBL/GenBank/DDBJ databases">
        <title>Complete sequence of chromosome of Staphylococcus aureus subsp. aureus JH9.</title>
        <authorList>
            <consortium name="US DOE Joint Genome Institute"/>
            <person name="Copeland A."/>
            <person name="Lucas S."/>
            <person name="Lapidus A."/>
            <person name="Barry K."/>
            <person name="Detter J.C."/>
            <person name="Glavina del Rio T."/>
            <person name="Hammon N."/>
            <person name="Israni S."/>
            <person name="Pitluck S."/>
            <person name="Chain P."/>
            <person name="Malfatti S."/>
            <person name="Shin M."/>
            <person name="Vergez L."/>
            <person name="Schmutz J."/>
            <person name="Larimer F."/>
            <person name="Land M."/>
            <person name="Hauser L."/>
            <person name="Kyrpides N."/>
            <person name="Kim E."/>
            <person name="Tomasz A."/>
            <person name="Richardson P."/>
        </authorList>
    </citation>
    <scope>NUCLEOTIDE SEQUENCE [LARGE SCALE GENOMIC DNA]</scope>
    <source>
        <strain>JH9</strain>
    </source>
</reference>